<sequence>MAAACPLPRTPDLPTLHDKLQGLLSFLRGALAISSAHTVDFYTKSVWQELVDLPPESVLAALRESAVEAEPREAETGSGFTELPKIFCETSQKLLSVEAFARTAKHYSVQNLGLCTPSEQLLTALQGNKRQRVDENVKAIEFMNTKKSHEVQAMSELICSIADYCGLKQIIDVGSGKGYLSSFLSLKYGLNVYGIDSSNTNTHGAKERNRKLKKHWSLYHPHSRADANGWASERPRELKVPKGVECKGDAESVQRSRLGNPDLSATDGLPDFSGSAISVIRKQQKNVLAQPAEEENLYFEDAFSLIDFLPVDAIEPTSSQVQNTEKSGLRKERRNTASKARDSSIYSPLTSFITADSQLHDIIEDLEDCLMVGLHTCGDLAPSTLRIFTSKAEVKAVCSVGCCYHLLSEEFENQHKDRCANENWGFPMCHYLKEERWCCGRNARMSACLALQRVAVGQGLPTESLFYRAVLQNIIKDYYGISKCEQHVGKIYSKCSSFLEYVRMSLKKLGLDESKVSEEIIMDYYENYKPRMNELEAFNMLKVVLAPCIETLILLDRLCYLKEQDGVAWSALVKLFDPVQSPRCYAVIALKKQCDLG</sequence>
<keyword id="KW-0489">Methyltransferase</keyword>
<keyword id="KW-1185">Reference proteome</keyword>
<keyword id="KW-0808">Transferase</keyword>
<gene>
    <name type="primary">Mettl25</name>
</gene>
<evidence type="ECO:0000256" key="1">
    <source>
        <dbReference type="SAM" id="MobiDB-lite"/>
    </source>
</evidence>
<evidence type="ECO:0000305" key="2"/>
<reference key="1">
    <citation type="journal article" date="2005" name="Science">
        <title>The transcriptional landscape of the mammalian genome.</title>
        <authorList>
            <person name="Carninci P."/>
            <person name="Kasukawa T."/>
            <person name="Katayama S."/>
            <person name="Gough J."/>
            <person name="Frith M.C."/>
            <person name="Maeda N."/>
            <person name="Oyama R."/>
            <person name="Ravasi T."/>
            <person name="Lenhard B."/>
            <person name="Wells C."/>
            <person name="Kodzius R."/>
            <person name="Shimokawa K."/>
            <person name="Bajic V.B."/>
            <person name="Brenner S.E."/>
            <person name="Batalov S."/>
            <person name="Forrest A.R."/>
            <person name="Zavolan M."/>
            <person name="Davis M.J."/>
            <person name="Wilming L.G."/>
            <person name="Aidinis V."/>
            <person name="Allen J.E."/>
            <person name="Ambesi-Impiombato A."/>
            <person name="Apweiler R."/>
            <person name="Aturaliya R.N."/>
            <person name="Bailey T.L."/>
            <person name="Bansal M."/>
            <person name="Baxter L."/>
            <person name="Beisel K.W."/>
            <person name="Bersano T."/>
            <person name="Bono H."/>
            <person name="Chalk A.M."/>
            <person name="Chiu K.P."/>
            <person name="Choudhary V."/>
            <person name="Christoffels A."/>
            <person name="Clutterbuck D.R."/>
            <person name="Crowe M.L."/>
            <person name="Dalla E."/>
            <person name="Dalrymple B.P."/>
            <person name="de Bono B."/>
            <person name="Della Gatta G."/>
            <person name="di Bernardo D."/>
            <person name="Down T."/>
            <person name="Engstrom P."/>
            <person name="Fagiolini M."/>
            <person name="Faulkner G."/>
            <person name="Fletcher C.F."/>
            <person name="Fukushima T."/>
            <person name="Furuno M."/>
            <person name="Futaki S."/>
            <person name="Gariboldi M."/>
            <person name="Georgii-Hemming P."/>
            <person name="Gingeras T.R."/>
            <person name="Gojobori T."/>
            <person name="Green R.E."/>
            <person name="Gustincich S."/>
            <person name="Harbers M."/>
            <person name="Hayashi Y."/>
            <person name="Hensch T.K."/>
            <person name="Hirokawa N."/>
            <person name="Hill D."/>
            <person name="Huminiecki L."/>
            <person name="Iacono M."/>
            <person name="Ikeo K."/>
            <person name="Iwama A."/>
            <person name="Ishikawa T."/>
            <person name="Jakt M."/>
            <person name="Kanapin A."/>
            <person name="Katoh M."/>
            <person name="Kawasawa Y."/>
            <person name="Kelso J."/>
            <person name="Kitamura H."/>
            <person name="Kitano H."/>
            <person name="Kollias G."/>
            <person name="Krishnan S.P."/>
            <person name="Kruger A."/>
            <person name="Kummerfeld S.K."/>
            <person name="Kurochkin I.V."/>
            <person name="Lareau L.F."/>
            <person name="Lazarevic D."/>
            <person name="Lipovich L."/>
            <person name="Liu J."/>
            <person name="Liuni S."/>
            <person name="McWilliam S."/>
            <person name="Madan Babu M."/>
            <person name="Madera M."/>
            <person name="Marchionni L."/>
            <person name="Matsuda H."/>
            <person name="Matsuzawa S."/>
            <person name="Miki H."/>
            <person name="Mignone F."/>
            <person name="Miyake S."/>
            <person name="Morris K."/>
            <person name="Mottagui-Tabar S."/>
            <person name="Mulder N."/>
            <person name="Nakano N."/>
            <person name="Nakauchi H."/>
            <person name="Ng P."/>
            <person name="Nilsson R."/>
            <person name="Nishiguchi S."/>
            <person name="Nishikawa S."/>
            <person name="Nori F."/>
            <person name="Ohara O."/>
            <person name="Okazaki Y."/>
            <person name="Orlando V."/>
            <person name="Pang K.C."/>
            <person name="Pavan W.J."/>
            <person name="Pavesi G."/>
            <person name="Pesole G."/>
            <person name="Petrovsky N."/>
            <person name="Piazza S."/>
            <person name="Reed J."/>
            <person name="Reid J.F."/>
            <person name="Ring B.Z."/>
            <person name="Ringwald M."/>
            <person name="Rost B."/>
            <person name="Ruan Y."/>
            <person name="Salzberg S.L."/>
            <person name="Sandelin A."/>
            <person name="Schneider C."/>
            <person name="Schoenbach C."/>
            <person name="Sekiguchi K."/>
            <person name="Semple C.A."/>
            <person name="Seno S."/>
            <person name="Sessa L."/>
            <person name="Sheng Y."/>
            <person name="Shibata Y."/>
            <person name="Shimada H."/>
            <person name="Shimada K."/>
            <person name="Silva D."/>
            <person name="Sinclair B."/>
            <person name="Sperling S."/>
            <person name="Stupka E."/>
            <person name="Sugiura K."/>
            <person name="Sultana R."/>
            <person name="Takenaka Y."/>
            <person name="Taki K."/>
            <person name="Tammoja K."/>
            <person name="Tan S.L."/>
            <person name="Tang S."/>
            <person name="Taylor M.S."/>
            <person name="Tegner J."/>
            <person name="Teichmann S.A."/>
            <person name="Ueda H.R."/>
            <person name="van Nimwegen E."/>
            <person name="Verardo R."/>
            <person name="Wei C.L."/>
            <person name="Yagi K."/>
            <person name="Yamanishi H."/>
            <person name="Zabarovsky E."/>
            <person name="Zhu S."/>
            <person name="Zimmer A."/>
            <person name="Hide W."/>
            <person name="Bult C."/>
            <person name="Grimmond S.M."/>
            <person name="Teasdale R.D."/>
            <person name="Liu E.T."/>
            <person name="Brusic V."/>
            <person name="Quackenbush J."/>
            <person name="Wahlestedt C."/>
            <person name="Mattick J.S."/>
            <person name="Hume D.A."/>
            <person name="Kai C."/>
            <person name="Sasaki D."/>
            <person name="Tomaru Y."/>
            <person name="Fukuda S."/>
            <person name="Kanamori-Katayama M."/>
            <person name="Suzuki M."/>
            <person name="Aoki J."/>
            <person name="Arakawa T."/>
            <person name="Iida J."/>
            <person name="Imamura K."/>
            <person name="Itoh M."/>
            <person name="Kato T."/>
            <person name="Kawaji H."/>
            <person name="Kawagashira N."/>
            <person name="Kawashima T."/>
            <person name="Kojima M."/>
            <person name="Kondo S."/>
            <person name="Konno H."/>
            <person name="Nakano K."/>
            <person name="Ninomiya N."/>
            <person name="Nishio T."/>
            <person name="Okada M."/>
            <person name="Plessy C."/>
            <person name="Shibata K."/>
            <person name="Shiraki T."/>
            <person name="Suzuki S."/>
            <person name="Tagami M."/>
            <person name="Waki K."/>
            <person name="Watahiki A."/>
            <person name="Okamura-Oho Y."/>
            <person name="Suzuki H."/>
            <person name="Kawai J."/>
            <person name="Hayashizaki Y."/>
        </authorList>
    </citation>
    <scope>NUCLEOTIDE SEQUENCE [LARGE SCALE MRNA]</scope>
    <source>
        <tissue>Lung</tissue>
    </source>
</reference>
<reference key="2">
    <citation type="journal article" date="2004" name="Genome Res.">
        <title>The status, quality, and expansion of the NIH full-length cDNA project: the Mammalian Gene Collection (MGC).</title>
        <authorList>
            <consortium name="The MGC Project Team"/>
        </authorList>
    </citation>
    <scope>NUCLEOTIDE SEQUENCE [LARGE SCALE MRNA]</scope>
    <source>
        <strain>C57BL/6J</strain>
        <tissue>Eye</tissue>
    </source>
</reference>
<accession>Q6NXH8</accession>
<accession>Q3UMX5</accession>
<comment type="function">
    <text evidence="2">Probable methyltransferase.</text>
</comment>
<organism>
    <name type="scientific">Mus musculus</name>
    <name type="common">Mouse</name>
    <dbReference type="NCBI Taxonomy" id="10090"/>
    <lineage>
        <taxon>Eukaryota</taxon>
        <taxon>Metazoa</taxon>
        <taxon>Chordata</taxon>
        <taxon>Craniata</taxon>
        <taxon>Vertebrata</taxon>
        <taxon>Euteleostomi</taxon>
        <taxon>Mammalia</taxon>
        <taxon>Eutheria</taxon>
        <taxon>Euarchontoglires</taxon>
        <taxon>Glires</taxon>
        <taxon>Rodentia</taxon>
        <taxon>Myomorpha</taxon>
        <taxon>Muroidea</taxon>
        <taxon>Muridae</taxon>
        <taxon>Murinae</taxon>
        <taxon>Mus</taxon>
        <taxon>Mus</taxon>
    </lineage>
</organism>
<dbReference type="EC" id="2.1.1.-" evidence="2"/>
<dbReference type="EMBL" id="AK144620">
    <property type="protein sequence ID" value="BAE25973.1"/>
    <property type="molecule type" value="mRNA"/>
</dbReference>
<dbReference type="EMBL" id="BC067068">
    <property type="protein sequence ID" value="AAH67068.1"/>
    <property type="molecule type" value="mRNA"/>
</dbReference>
<dbReference type="CCDS" id="CCDS36049.2"/>
<dbReference type="RefSeq" id="NP_997405.2">
    <property type="nucleotide sequence ID" value="NM_207522.2"/>
</dbReference>
<dbReference type="FunCoup" id="Q6NXH8">
    <property type="interactions" value="9"/>
</dbReference>
<dbReference type="STRING" id="10090.ENSMUSP00000038665"/>
<dbReference type="GlyGen" id="Q6NXH8">
    <property type="glycosylation" value="1 site"/>
</dbReference>
<dbReference type="iPTMnet" id="Q6NXH8"/>
<dbReference type="PhosphoSitePlus" id="Q6NXH8"/>
<dbReference type="PaxDb" id="10090-ENSMUSP00000038665"/>
<dbReference type="ProteomicsDB" id="292297"/>
<dbReference type="Pumba" id="Q6NXH8"/>
<dbReference type="GeneID" id="216292"/>
<dbReference type="KEGG" id="mmu:216292"/>
<dbReference type="UCSC" id="uc007gyo.2">
    <property type="organism name" value="mouse"/>
</dbReference>
<dbReference type="AGR" id="MGI:3041259"/>
<dbReference type="CTD" id="84190"/>
<dbReference type="MGI" id="MGI:3041259">
    <property type="gene designation" value="Mettl25"/>
</dbReference>
<dbReference type="eggNOG" id="KOG2651">
    <property type="taxonomic scope" value="Eukaryota"/>
</dbReference>
<dbReference type="InParanoid" id="Q6NXH8"/>
<dbReference type="PhylomeDB" id="Q6NXH8"/>
<dbReference type="TreeFam" id="TF312998"/>
<dbReference type="BioGRID-ORCS" id="216292">
    <property type="hits" value="1 hit in 79 CRISPR screens"/>
</dbReference>
<dbReference type="PRO" id="PR:Q6NXH8"/>
<dbReference type="Proteomes" id="UP000000589">
    <property type="component" value="Unplaced"/>
</dbReference>
<dbReference type="RNAct" id="Q6NXH8">
    <property type="molecule type" value="protein"/>
</dbReference>
<dbReference type="GO" id="GO:0008168">
    <property type="term" value="F:methyltransferase activity"/>
    <property type="evidence" value="ECO:0007669"/>
    <property type="project" value="UniProtKB-KW"/>
</dbReference>
<dbReference type="GO" id="GO:0032259">
    <property type="term" value="P:methylation"/>
    <property type="evidence" value="ECO:0007669"/>
    <property type="project" value="UniProtKB-KW"/>
</dbReference>
<dbReference type="Gene3D" id="3.40.50.150">
    <property type="entry name" value="Vaccinia Virus protein VP39"/>
    <property type="match status" value="1"/>
</dbReference>
<dbReference type="InterPro" id="IPR025714">
    <property type="entry name" value="Methyltranfer_dom"/>
</dbReference>
<dbReference type="InterPro" id="IPR052220">
    <property type="entry name" value="METTL25"/>
</dbReference>
<dbReference type="InterPro" id="IPR029063">
    <property type="entry name" value="SAM-dependent_MTases_sf"/>
</dbReference>
<dbReference type="PANTHER" id="PTHR12496">
    <property type="entry name" value="CGI-41 METHYLTRANSFERASE"/>
    <property type="match status" value="1"/>
</dbReference>
<dbReference type="PANTHER" id="PTHR12496:SF9">
    <property type="entry name" value="METHYLTRANSFERASE-LIKE PROTEIN 25-RELATED"/>
    <property type="match status" value="1"/>
</dbReference>
<dbReference type="Pfam" id="PF13679">
    <property type="entry name" value="Methyltransf_32"/>
    <property type="match status" value="1"/>
</dbReference>
<dbReference type="SUPFAM" id="SSF53335">
    <property type="entry name" value="S-adenosyl-L-methionine-dependent methyltransferases"/>
    <property type="match status" value="1"/>
</dbReference>
<name>MET25_MOUSE</name>
<feature type="chain" id="PRO_0000252149" description="Probable methyltransferase-like protein 25">
    <location>
        <begin position="1"/>
        <end position="597"/>
    </location>
</feature>
<feature type="region of interest" description="Disordered" evidence="1">
    <location>
        <begin position="245"/>
        <end position="265"/>
    </location>
</feature>
<feature type="region of interest" description="Disordered" evidence="1">
    <location>
        <begin position="317"/>
        <end position="342"/>
    </location>
</feature>
<feature type="compositionally biased region" description="Basic and acidic residues" evidence="1">
    <location>
        <begin position="245"/>
        <end position="254"/>
    </location>
</feature>
<feature type="compositionally biased region" description="Polar residues" evidence="1">
    <location>
        <begin position="317"/>
        <end position="326"/>
    </location>
</feature>
<feature type="sequence conflict" description="In Ref. 1; BAE25973." evidence="2" ref="1">
    <original>M</original>
    <variation>MSVM</variation>
    <location>
        <position position="1"/>
    </location>
</feature>
<feature type="sequence conflict" description="In Ref. 1; BAE25973." evidence="2" ref="1">
    <original>L</original>
    <variation>R</variation>
    <location>
        <position position="596"/>
    </location>
</feature>
<protein>
    <recommendedName>
        <fullName evidence="2">Probable methyltransferase-like protein 25</fullName>
        <ecNumber evidence="2">2.1.1.-</ecNumber>
    </recommendedName>
</protein>
<proteinExistence type="evidence at transcript level"/>